<sequence>MYLSRLELTDFRSYRRAALELDPGVNVFVGSNGQGKTNLVEAVCYLALLRSHRTATDAPLVRQGSERAVLHGEVLTSGRRIDLDVEIVPGRANRLRVNGHATRRARDLVGILRVVIFAPEDLALVKGDPAARRDYLDDVLVELRPRLFAVRAEYEKALRQRNAFLRAVAQDGQQVDRNSLDVWNLHFARAAAALLDARRRLVHELAPFVEKAYAAISGGSGAVRLEYRSTVPEEVLQDADEETRIAGILAALRKVQDAELARGLTLVGPHRDDLNLELDSRPARGYASHGESWSYALALRLGAYELLRSDGETPVMILDDVYAELDQQRRRRLTGCVSGAEQLLITSAVDEPDLPVGRRYVVHESQVHVAD</sequence>
<comment type="function">
    <text evidence="1">The RecF protein is involved in DNA metabolism; it is required for DNA replication and normal SOS inducibility. RecF binds preferentially to single-stranded, linear DNA. It also seems to bind ATP.</text>
</comment>
<comment type="subcellular location">
    <subcellularLocation>
        <location evidence="1">Cytoplasm</location>
    </subcellularLocation>
</comment>
<comment type="similarity">
    <text evidence="1">Belongs to the RecF family.</text>
</comment>
<evidence type="ECO:0000255" key="1">
    <source>
        <dbReference type="HAMAP-Rule" id="MF_00365"/>
    </source>
</evidence>
<protein>
    <recommendedName>
        <fullName evidence="1">DNA replication and repair protein RecF</fullName>
    </recommendedName>
</protein>
<feature type="chain" id="PRO_1000048498" description="DNA replication and repair protein RecF">
    <location>
        <begin position="1"/>
        <end position="371"/>
    </location>
</feature>
<feature type="binding site" evidence="1">
    <location>
        <begin position="30"/>
        <end position="37"/>
    </location>
    <ligand>
        <name>ATP</name>
        <dbReference type="ChEBI" id="CHEBI:30616"/>
    </ligand>
</feature>
<proteinExistence type="inferred from homology"/>
<reference key="1">
    <citation type="journal article" date="2009" name="Genome Res.">
        <title>Complete genome of the cellulolytic thermophile Acidothermus cellulolyticus 11B provides insights into its ecophysiological and evolutionary adaptations.</title>
        <authorList>
            <person name="Barabote R.D."/>
            <person name="Xie G."/>
            <person name="Leu D.H."/>
            <person name="Normand P."/>
            <person name="Necsulea A."/>
            <person name="Daubin V."/>
            <person name="Medigue C."/>
            <person name="Adney W.S."/>
            <person name="Xu X.C."/>
            <person name="Lapidus A."/>
            <person name="Parales R.E."/>
            <person name="Detter C."/>
            <person name="Pujic P."/>
            <person name="Bruce D."/>
            <person name="Lavire C."/>
            <person name="Challacombe J.F."/>
            <person name="Brettin T.S."/>
            <person name="Berry A.M."/>
        </authorList>
    </citation>
    <scope>NUCLEOTIDE SEQUENCE [LARGE SCALE GENOMIC DNA]</scope>
    <source>
        <strain>ATCC 43068 / DSM 8971 / 11B</strain>
    </source>
</reference>
<organism>
    <name type="scientific">Acidothermus cellulolyticus (strain ATCC 43068 / DSM 8971 / 11B)</name>
    <dbReference type="NCBI Taxonomy" id="351607"/>
    <lineage>
        <taxon>Bacteria</taxon>
        <taxon>Bacillati</taxon>
        <taxon>Actinomycetota</taxon>
        <taxon>Actinomycetes</taxon>
        <taxon>Acidothermales</taxon>
        <taxon>Acidothermaceae</taxon>
        <taxon>Acidothermus</taxon>
    </lineage>
</organism>
<dbReference type="EMBL" id="CP000481">
    <property type="protein sequence ID" value="ABK51779.1"/>
    <property type="molecule type" value="Genomic_DNA"/>
</dbReference>
<dbReference type="RefSeq" id="WP_011718843.1">
    <property type="nucleotide sequence ID" value="NC_008578.1"/>
</dbReference>
<dbReference type="SMR" id="A0LQR9"/>
<dbReference type="FunCoup" id="A0LQR9">
    <property type="interactions" value="14"/>
</dbReference>
<dbReference type="STRING" id="351607.Acel_0003"/>
<dbReference type="KEGG" id="ace:Acel_0003"/>
<dbReference type="eggNOG" id="COG1195">
    <property type="taxonomic scope" value="Bacteria"/>
</dbReference>
<dbReference type="HOGENOM" id="CLU_040267_1_1_11"/>
<dbReference type="InParanoid" id="A0LQR9"/>
<dbReference type="OrthoDB" id="9803889at2"/>
<dbReference type="Proteomes" id="UP000008221">
    <property type="component" value="Chromosome"/>
</dbReference>
<dbReference type="GO" id="GO:0005737">
    <property type="term" value="C:cytoplasm"/>
    <property type="evidence" value="ECO:0007669"/>
    <property type="project" value="UniProtKB-SubCell"/>
</dbReference>
<dbReference type="GO" id="GO:0005524">
    <property type="term" value="F:ATP binding"/>
    <property type="evidence" value="ECO:0007669"/>
    <property type="project" value="UniProtKB-UniRule"/>
</dbReference>
<dbReference type="GO" id="GO:0003697">
    <property type="term" value="F:single-stranded DNA binding"/>
    <property type="evidence" value="ECO:0007669"/>
    <property type="project" value="UniProtKB-UniRule"/>
</dbReference>
<dbReference type="GO" id="GO:0006260">
    <property type="term" value="P:DNA replication"/>
    <property type="evidence" value="ECO:0007669"/>
    <property type="project" value="UniProtKB-UniRule"/>
</dbReference>
<dbReference type="GO" id="GO:0000731">
    <property type="term" value="P:DNA synthesis involved in DNA repair"/>
    <property type="evidence" value="ECO:0007669"/>
    <property type="project" value="TreeGrafter"/>
</dbReference>
<dbReference type="GO" id="GO:0006302">
    <property type="term" value="P:double-strand break repair"/>
    <property type="evidence" value="ECO:0007669"/>
    <property type="project" value="TreeGrafter"/>
</dbReference>
<dbReference type="GO" id="GO:0009432">
    <property type="term" value="P:SOS response"/>
    <property type="evidence" value="ECO:0007669"/>
    <property type="project" value="UniProtKB-UniRule"/>
</dbReference>
<dbReference type="Gene3D" id="3.40.50.300">
    <property type="entry name" value="P-loop containing nucleotide triphosphate hydrolases"/>
    <property type="match status" value="1"/>
</dbReference>
<dbReference type="Gene3D" id="1.20.1050.90">
    <property type="entry name" value="RecF/RecN/SMC, N-terminal domain"/>
    <property type="match status" value="1"/>
</dbReference>
<dbReference type="HAMAP" id="MF_00365">
    <property type="entry name" value="RecF"/>
    <property type="match status" value="1"/>
</dbReference>
<dbReference type="InterPro" id="IPR001238">
    <property type="entry name" value="DNA-binding_RecF"/>
</dbReference>
<dbReference type="InterPro" id="IPR018078">
    <property type="entry name" value="DNA-binding_RecF_CS"/>
</dbReference>
<dbReference type="InterPro" id="IPR027417">
    <property type="entry name" value="P-loop_NTPase"/>
</dbReference>
<dbReference type="InterPro" id="IPR003395">
    <property type="entry name" value="RecF/RecN/SMC_N"/>
</dbReference>
<dbReference type="InterPro" id="IPR042174">
    <property type="entry name" value="RecF_2"/>
</dbReference>
<dbReference type="NCBIfam" id="TIGR00611">
    <property type="entry name" value="recf"/>
    <property type="match status" value="1"/>
</dbReference>
<dbReference type="PANTHER" id="PTHR32182">
    <property type="entry name" value="DNA REPLICATION AND REPAIR PROTEIN RECF"/>
    <property type="match status" value="1"/>
</dbReference>
<dbReference type="PANTHER" id="PTHR32182:SF0">
    <property type="entry name" value="DNA REPLICATION AND REPAIR PROTEIN RECF"/>
    <property type="match status" value="1"/>
</dbReference>
<dbReference type="Pfam" id="PF02463">
    <property type="entry name" value="SMC_N"/>
    <property type="match status" value="1"/>
</dbReference>
<dbReference type="SUPFAM" id="SSF52540">
    <property type="entry name" value="P-loop containing nucleoside triphosphate hydrolases"/>
    <property type="match status" value="1"/>
</dbReference>
<dbReference type="PROSITE" id="PS00617">
    <property type="entry name" value="RECF_1"/>
    <property type="match status" value="1"/>
</dbReference>
<dbReference type="PROSITE" id="PS00618">
    <property type="entry name" value="RECF_2"/>
    <property type="match status" value="1"/>
</dbReference>
<keyword id="KW-0067">ATP-binding</keyword>
<keyword id="KW-0963">Cytoplasm</keyword>
<keyword id="KW-0227">DNA damage</keyword>
<keyword id="KW-0234">DNA repair</keyword>
<keyword id="KW-0235">DNA replication</keyword>
<keyword id="KW-0238">DNA-binding</keyword>
<keyword id="KW-0547">Nucleotide-binding</keyword>
<keyword id="KW-1185">Reference proteome</keyword>
<keyword id="KW-0742">SOS response</keyword>
<accession>A0LQR9</accession>
<name>RECF_ACIC1</name>
<gene>
    <name evidence="1" type="primary">recF</name>
    <name type="ordered locus">Acel_0003</name>
</gene>